<protein>
    <recommendedName>
        <fullName evidence="1">Thymidylate synthase</fullName>
        <shortName evidence="1">TS</shortName>
        <shortName evidence="1">TSase</shortName>
        <ecNumber evidence="1">2.1.1.45</ecNumber>
    </recommendedName>
</protein>
<evidence type="ECO:0000255" key="1">
    <source>
        <dbReference type="HAMAP-Rule" id="MF_00008"/>
    </source>
</evidence>
<feature type="chain" id="PRO_1000073886" description="Thymidylate synthase">
    <location>
        <begin position="1"/>
        <end position="283"/>
    </location>
</feature>
<feature type="active site" description="Nucleophile" evidence="1">
    <location>
        <position position="160"/>
    </location>
</feature>
<feature type="binding site" evidence="1">
    <location>
        <position position="22"/>
    </location>
    <ligand>
        <name>dUMP</name>
        <dbReference type="ChEBI" id="CHEBI:246422"/>
    </ligand>
</feature>
<feature type="binding site" evidence="1">
    <location>
        <begin position="180"/>
        <end position="183"/>
    </location>
    <ligand>
        <name>dUMP</name>
        <dbReference type="ChEBI" id="CHEBI:246422"/>
    </ligand>
</feature>
<feature type="binding site" evidence="1">
    <location>
        <position position="183"/>
    </location>
    <ligand>
        <name>(6R)-5,10-methylene-5,6,7,8-tetrahydrofolate</name>
        <dbReference type="ChEBI" id="CHEBI:15636"/>
    </ligand>
</feature>
<feature type="binding site" evidence="1">
    <location>
        <position position="191"/>
    </location>
    <ligand>
        <name>dUMP</name>
        <dbReference type="ChEBI" id="CHEBI:246422"/>
    </ligand>
</feature>
<feature type="binding site" evidence="1">
    <location>
        <begin position="221"/>
        <end position="223"/>
    </location>
    <ligand>
        <name>dUMP</name>
        <dbReference type="ChEBI" id="CHEBI:246422"/>
    </ligand>
</feature>
<feature type="binding site" evidence="1">
    <location>
        <position position="282"/>
    </location>
    <ligand>
        <name>(6R)-5,10-methylene-5,6,7,8-tetrahydrofolate</name>
        <dbReference type="ChEBI" id="CHEBI:15636"/>
    </ligand>
</feature>
<name>TYSY_SHESH</name>
<reference key="1">
    <citation type="submission" date="2007-08" db="EMBL/GenBank/DDBJ databases">
        <title>Complete sequence of Shewanella sediminis HAW-EB3.</title>
        <authorList>
            <consortium name="US DOE Joint Genome Institute"/>
            <person name="Copeland A."/>
            <person name="Lucas S."/>
            <person name="Lapidus A."/>
            <person name="Barry K."/>
            <person name="Glavina del Rio T."/>
            <person name="Dalin E."/>
            <person name="Tice H."/>
            <person name="Pitluck S."/>
            <person name="Chertkov O."/>
            <person name="Brettin T."/>
            <person name="Bruce D."/>
            <person name="Detter J.C."/>
            <person name="Han C."/>
            <person name="Schmutz J."/>
            <person name="Larimer F."/>
            <person name="Land M."/>
            <person name="Hauser L."/>
            <person name="Kyrpides N."/>
            <person name="Kim E."/>
            <person name="Zhao J.-S."/>
            <person name="Richardson P."/>
        </authorList>
    </citation>
    <scope>NUCLEOTIDE SEQUENCE [LARGE SCALE GENOMIC DNA]</scope>
    <source>
        <strain>HAW-EB3</strain>
    </source>
</reference>
<dbReference type="EC" id="2.1.1.45" evidence="1"/>
<dbReference type="EMBL" id="CP000821">
    <property type="protein sequence ID" value="ABV35746.1"/>
    <property type="molecule type" value="Genomic_DNA"/>
</dbReference>
<dbReference type="RefSeq" id="WP_012141482.1">
    <property type="nucleotide sequence ID" value="NC_009831.1"/>
</dbReference>
<dbReference type="SMR" id="A8FSC3"/>
<dbReference type="STRING" id="425104.Ssed_1135"/>
<dbReference type="KEGG" id="sse:Ssed_1135"/>
<dbReference type="eggNOG" id="COG0207">
    <property type="taxonomic scope" value="Bacteria"/>
</dbReference>
<dbReference type="HOGENOM" id="CLU_021669_0_1_6"/>
<dbReference type="OrthoDB" id="9774633at2"/>
<dbReference type="UniPathway" id="UPA00575"/>
<dbReference type="Proteomes" id="UP000002015">
    <property type="component" value="Chromosome"/>
</dbReference>
<dbReference type="GO" id="GO:0005829">
    <property type="term" value="C:cytosol"/>
    <property type="evidence" value="ECO:0007669"/>
    <property type="project" value="TreeGrafter"/>
</dbReference>
<dbReference type="GO" id="GO:0004799">
    <property type="term" value="F:thymidylate synthase activity"/>
    <property type="evidence" value="ECO:0007669"/>
    <property type="project" value="UniProtKB-UniRule"/>
</dbReference>
<dbReference type="GO" id="GO:0006231">
    <property type="term" value="P:dTMP biosynthetic process"/>
    <property type="evidence" value="ECO:0007669"/>
    <property type="project" value="UniProtKB-UniRule"/>
</dbReference>
<dbReference type="GO" id="GO:0006235">
    <property type="term" value="P:dTTP biosynthetic process"/>
    <property type="evidence" value="ECO:0007669"/>
    <property type="project" value="UniProtKB-UniRule"/>
</dbReference>
<dbReference type="GO" id="GO:0032259">
    <property type="term" value="P:methylation"/>
    <property type="evidence" value="ECO:0007669"/>
    <property type="project" value="UniProtKB-KW"/>
</dbReference>
<dbReference type="CDD" id="cd00351">
    <property type="entry name" value="TS_Pyrimidine_HMase"/>
    <property type="match status" value="1"/>
</dbReference>
<dbReference type="Gene3D" id="3.30.572.10">
    <property type="entry name" value="Thymidylate synthase/dCMP hydroxymethylase domain"/>
    <property type="match status" value="1"/>
</dbReference>
<dbReference type="HAMAP" id="MF_00008">
    <property type="entry name" value="Thymidy_synth_bact"/>
    <property type="match status" value="1"/>
</dbReference>
<dbReference type="InterPro" id="IPR045097">
    <property type="entry name" value="Thymidate_synth/dCMP_Mease"/>
</dbReference>
<dbReference type="InterPro" id="IPR023451">
    <property type="entry name" value="Thymidate_synth/dCMP_Mease_dom"/>
</dbReference>
<dbReference type="InterPro" id="IPR036926">
    <property type="entry name" value="Thymidate_synth/dCMP_Mease_sf"/>
</dbReference>
<dbReference type="InterPro" id="IPR000398">
    <property type="entry name" value="Thymidylate_synthase"/>
</dbReference>
<dbReference type="NCBIfam" id="NF002498">
    <property type="entry name" value="PRK01827.1-4"/>
    <property type="match status" value="1"/>
</dbReference>
<dbReference type="NCBIfam" id="TIGR03284">
    <property type="entry name" value="thym_sym"/>
    <property type="match status" value="1"/>
</dbReference>
<dbReference type="PANTHER" id="PTHR11548:SF9">
    <property type="entry name" value="THYMIDYLATE SYNTHASE"/>
    <property type="match status" value="1"/>
</dbReference>
<dbReference type="PANTHER" id="PTHR11548">
    <property type="entry name" value="THYMIDYLATE SYNTHASE 1"/>
    <property type="match status" value="1"/>
</dbReference>
<dbReference type="Pfam" id="PF00303">
    <property type="entry name" value="Thymidylat_synt"/>
    <property type="match status" value="1"/>
</dbReference>
<dbReference type="PRINTS" id="PR00108">
    <property type="entry name" value="THYMDSNTHASE"/>
</dbReference>
<dbReference type="SUPFAM" id="SSF55831">
    <property type="entry name" value="Thymidylate synthase/dCMP hydroxymethylase"/>
    <property type="match status" value="1"/>
</dbReference>
<gene>
    <name evidence="1" type="primary">thyA</name>
    <name type="ordered locus">Ssed_1135</name>
</gene>
<comment type="function">
    <text evidence="1">Catalyzes the reductive methylation of 2'-deoxyuridine-5'-monophosphate (dUMP) to 2'-deoxythymidine-5'-monophosphate (dTMP) while utilizing 5,10-methylenetetrahydrofolate (mTHF) as the methyl donor and reductant in the reaction, yielding dihydrofolate (DHF) as a by-product. This enzymatic reaction provides an intracellular de novo source of dTMP, an essential precursor for DNA biosynthesis.</text>
</comment>
<comment type="catalytic activity">
    <reaction evidence="1">
        <text>dUMP + (6R)-5,10-methylene-5,6,7,8-tetrahydrofolate = 7,8-dihydrofolate + dTMP</text>
        <dbReference type="Rhea" id="RHEA:12104"/>
        <dbReference type="ChEBI" id="CHEBI:15636"/>
        <dbReference type="ChEBI" id="CHEBI:57451"/>
        <dbReference type="ChEBI" id="CHEBI:63528"/>
        <dbReference type="ChEBI" id="CHEBI:246422"/>
        <dbReference type="EC" id="2.1.1.45"/>
    </reaction>
</comment>
<comment type="pathway">
    <text evidence="1">Pyrimidine metabolism; dTTP biosynthesis.</text>
</comment>
<comment type="subunit">
    <text evidence="1">Homodimer.</text>
</comment>
<comment type="subcellular location">
    <subcellularLocation>
        <location evidence="1">Cytoplasm</location>
    </subcellularLocation>
</comment>
<comment type="similarity">
    <text evidence="1">Belongs to the thymidylate synthase family. Bacterial-type ThyA subfamily.</text>
</comment>
<keyword id="KW-0963">Cytoplasm</keyword>
<keyword id="KW-0489">Methyltransferase</keyword>
<keyword id="KW-0545">Nucleotide biosynthesis</keyword>
<keyword id="KW-1185">Reference proteome</keyword>
<keyword id="KW-0808">Transferase</keyword>
<accession>A8FSC3</accession>
<organism>
    <name type="scientific">Shewanella sediminis (strain HAW-EB3)</name>
    <dbReference type="NCBI Taxonomy" id="425104"/>
    <lineage>
        <taxon>Bacteria</taxon>
        <taxon>Pseudomonadati</taxon>
        <taxon>Pseudomonadota</taxon>
        <taxon>Gammaproteobacteria</taxon>
        <taxon>Alteromonadales</taxon>
        <taxon>Shewanellaceae</taxon>
        <taxon>Shewanella</taxon>
    </lineage>
</organism>
<sequence>MKQYLELCNRIIDEGTWIENERTGKRCLTVINADLTYNVGNNEFPLITTRKSFWKSAIAEMLGYIRGYDNAADFRALGAKTWDANANENQVWLNNPHRKGVDDMGRVYGVQGRAWSKPDGGTVDQLKKIVDNLKAGVDDRGEILSFYNPGEFHMGCLRPCMHTHNFSLLGDTLYLNSFQRSCDVPLGLNFNQVQVYTLLALIAQITGKKPGMAYHKIVNAHIYEDQLALMRDVQLKREPFEPASLSINPDIKSLEDLETWVTMDDFEVSGYQHHEAIKYPFSV</sequence>
<proteinExistence type="inferred from homology"/>